<proteinExistence type="inferred from homology"/>
<reference key="1">
    <citation type="journal article" date="2007" name="ISME J.">
        <title>Population level functional diversity in a microbial community revealed by comparative genomic and metagenomic analyses.</title>
        <authorList>
            <person name="Bhaya D."/>
            <person name="Grossman A.R."/>
            <person name="Steunou A.-S."/>
            <person name="Khuri N."/>
            <person name="Cohan F.M."/>
            <person name="Hamamura N."/>
            <person name="Melendrez M.C."/>
            <person name="Bateson M.M."/>
            <person name="Ward D.M."/>
            <person name="Heidelberg J.F."/>
        </authorList>
    </citation>
    <scope>NUCLEOTIDE SEQUENCE [LARGE SCALE GENOMIC DNA]</scope>
    <source>
        <strain>JA-2-3B'a(2-13)</strain>
    </source>
</reference>
<name>MIAA_SYNJB</name>
<keyword id="KW-0067">ATP-binding</keyword>
<keyword id="KW-0460">Magnesium</keyword>
<keyword id="KW-0547">Nucleotide-binding</keyword>
<keyword id="KW-1185">Reference proteome</keyword>
<keyword id="KW-0808">Transferase</keyword>
<keyword id="KW-0819">tRNA processing</keyword>
<dbReference type="EC" id="2.5.1.75" evidence="1"/>
<dbReference type="EMBL" id="CP000240">
    <property type="protein sequence ID" value="ABD02992.1"/>
    <property type="molecule type" value="Genomic_DNA"/>
</dbReference>
<dbReference type="RefSeq" id="WP_011433631.1">
    <property type="nucleotide sequence ID" value="NC_007776.1"/>
</dbReference>
<dbReference type="SMR" id="Q2JK09"/>
<dbReference type="STRING" id="321332.CYB_2044"/>
<dbReference type="KEGG" id="cyb:CYB_2044"/>
<dbReference type="eggNOG" id="COG0324">
    <property type="taxonomic scope" value="Bacteria"/>
</dbReference>
<dbReference type="HOGENOM" id="CLU_032616_0_1_3"/>
<dbReference type="OrthoDB" id="9776390at2"/>
<dbReference type="Proteomes" id="UP000001938">
    <property type="component" value="Chromosome"/>
</dbReference>
<dbReference type="GO" id="GO:0005524">
    <property type="term" value="F:ATP binding"/>
    <property type="evidence" value="ECO:0007669"/>
    <property type="project" value="UniProtKB-UniRule"/>
</dbReference>
<dbReference type="GO" id="GO:0052381">
    <property type="term" value="F:tRNA dimethylallyltransferase activity"/>
    <property type="evidence" value="ECO:0007669"/>
    <property type="project" value="UniProtKB-UniRule"/>
</dbReference>
<dbReference type="GO" id="GO:0006400">
    <property type="term" value="P:tRNA modification"/>
    <property type="evidence" value="ECO:0007669"/>
    <property type="project" value="TreeGrafter"/>
</dbReference>
<dbReference type="Gene3D" id="1.10.20.140">
    <property type="match status" value="1"/>
</dbReference>
<dbReference type="Gene3D" id="3.40.50.300">
    <property type="entry name" value="P-loop containing nucleotide triphosphate hydrolases"/>
    <property type="match status" value="1"/>
</dbReference>
<dbReference type="HAMAP" id="MF_00185">
    <property type="entry name" value="IPP_trans"/>
    <property type="match status" value="1"/>
</dbReference>
<dbReference type="InterPro" id="IPR039657">
    <property type="entry name" value="Dimethylallyltransferase"/>
</dbReference>
<dbReference type="InterPro" id="IPR018022">
    <property type="entry name" value="IPT"/>
</dbReference>
<dbReference type="InterPro" id="IPR027417">
    <property type="entry name" value="P-loop_NTPase"/>
</dbReference>
<dbReference type="NCBIfam" id="TIGR00174">
    <property type="entry name" value="miaA"/>
    <property type="match status" value="1"/>
</dbReference>
<dbReference type="PANTHER" id="PTHR11088">
    <property type="entry name" value="TRNA DIMETHYLALLYLTRANSFERASE"/>
    <property type="match status" value="1"/>
</dbReference>
<dbReference type="PANTHER" id="PTHR11088:SF60">
    <property type="entry name" value="TRNA DIMETHYLALLYLTRANSFERASE"/>
    <property type="match status" value="1"/>
</dbReference>
<dbReference type="Pfam" id="PF01715">
    <property type="entry name" value="IPPT"/>
    <property type="match status" value="1"/>
</dbReference>
<dbReference type="SUPFAM" id="SSF52540">
    <property type="entry name" value="P-loop containing nucleoside triphosphate hydrolases"/>
    <property type="match status" value="2"/>
</dbReference>
<evidence type="ECO:0000255" key="1">
    <source>
        <dbReference type="HAMAP-Rule" id="MF_00185"/>
    </source>
</evidence>
<sequence>MRITLENGIPAAAASDRTEWPGLIVIAGPTATGKSRQALLLAQRLGSPLLNADSRQVYREFDIGTAKPTPAEQALWPHELIDIVDPCHTYTVAEFQQAAQARIAEAHRQGQTPILVGGTGLYIQSVTAGLGIPAVPPQPQLRRQLETWPPEIRYAWLQQLDPVAAQHIHPHDAVRTLRALEIVYTTGKPASSLRRAHPPHYPILILGLRCPMPRLEQRIARRTAEMMERGWIEEVKTLRERYGPDLPLLQTLGYAEIGAYLEGRIPEAELQPLIVRRTRQFAKRQMTWFRAMLGIQKGHAYGTLSGRGRCVALWLDCEAEDLPEQIWKQVKAWMAAPTTVETSPAAAEHRLFDP</sequence>
<comment type="function">
    <text evidence="1">Catalyzes the transfer of a dimethylallyl group onto the adenine at position 37 in tRNAs that read codons beginning with uridine, leading to the formation of N6-(dimethylallyl)adenosine (i(6)A).</text>
</comment>
<comment type="catalytic activity">
    <reaction evidence="1">
        <text>adenosine(37) in tRNA + dimethylallyl diphosphate = N(6)-dimethylallyladenosine(37) in tRNA + diphosphate</text>
        <dbReference type="Rhea" id="RHEA:26482"/>
        <dbReference type="Rhea" id="RHEA-COMP:10162"/>
        <dbReference type="Rhea" id="RHEA-COMP:10375"/>
        <dbReference type="ChEBI" id="CHEBI:33019"/>
        <dbReference type="ChEBI" id="CHEBI:57623"/>
        <dbReference type="ChEBI" id="CHEBI:74411"/>
        <dbReference type="ChEBI" id="CHEBI:74415"/>
        <dbReference type="EC" id="2.5.1.75"/>
    </reaction>
</comment>
<comment type="cofactor">
    <cofactor evidence="1">
        <name>Mg(2+)</name>
        <dbReference type="ChEBI" id="CHEBI:18420"/>
    </cofactor>
</comment>
<comment type="subunit">
    <text evidence="1">Monomer.</text>
</comment>
<comment type="similarity">
    <text evidence="1">Belongs to the IPP transferase family.</text>
</comment>
<gene>
    <name evidence="1" type="primary">miaA</name>
    <name type="ordered locus">CYB_2044</name>
</gene>
<organism>
    <name type="scientific">Synechococcus sp. (strain JA-2-3B'a(2-13))</name>
    <name type="common">Cyanobacteria bacterium Yellowstone B-Prime</name>
    <dbReference type="NCBI Taxonomy" id="321332"/>
    <lineage>
        <taxon>Bacteria</taxon>
        <taxon>Bacillati</taxon>
        <taxon>Cyanobacteriota</taxon>
        <taxon>Cyanophyceae</taxon>
        <taxon>Synechococcales</taxon>
        <taxon>Synechococcaceae</taxon>
        <taxon>Synechococcus</taxon>
    </lineage>
</organism>
<accession>Q2JK09</accession>
<protein>
    <recommendedName>
        <fullName evidence="1">tRNA dimethylallyltransferase</fullName>
        <ecNumber evidence="1">2.5.1.75</ecNumber>
    </recommendedName>
    <alternativeName>
        <fullName evidence="1">Dimethylallyl diphosphate:tRNA dimethylallyltransferase</fullName>
        <shortName evidence="1">DMAPP:tRNA dimethylallyltransferase</shortName>
        <shortName evidence="1">DMATase</shortName>
    </alternativeName>
    <alternativeName>
        <fullName evidence="1">Isopentenyl-diphosphate:tRNA isopentenyltransferase</fullName>
        <shortName evidence="1">IPP transferase</shortName>
        <shortName evidence="1">IPPT</shortName>
        <shortName evidence="1">IPTase</shortName>
    </alternativeName>
</protein>
<feature type="chain" id="PRO_0000377346" description="tRNA dimethylallyltransferase">
    <location>
        <begin position="1"/>
        <end position="354"/>
    </location>
</feature>
<feature type="region of interest" description="Interaction with substrate tRNA" evidence="1">
    <location>
        <begin position="53"/>
        <end position="56"/>
    </location>
</feature>
<feature type="binding site" evidence="1">
    <location>
        <begin position="28"/>
        <end position="35"/>
    </location>
    <ligand>
        <name>ATP</name>
        <dbReference type="ChEBI" id="CHEBI:30616"/>
    </ligand>
</feature>
<feature type="binding site" evidence="1">
    <location>
        <begin position="30"/>
        <end position="35"/>
    </location>
    <ligand>
        <name>substrate</name>
    </ligand>
</feature>
<feature type="site" description="Interaction with substrate tRNA" evidence="1">
    <location>
        <position position="119"/>
    </location>
</feature>